<accession>P0A1D5</accession>
<accession>Q9LC51</accession>
<proteinExistence type="inferred from homology"/>
<sequence length="97" mass="10318">MSIRPLHDRVIVKRKEVESKSAGGIVLTGSAAGKSTRGEIIAVGKGRILDNGTVQPLDVKVGDIVIFNDGYGVKSEKIDNEEVLIMSESDILAIVEA</sequence>
<dbReference type="EMBL" id="AB033231">
    <property type="protein sequence ID" value="BAA94285.1"/>
    <property type="molecule type" value="Genomic_DNA"/>
</dbReference>
<dbReference type="EMBL" id="AE006468">
    <property type="protein sequence ID" value="AAL23152.1"/>
    <property type="molecule type" value="Genomic_DNA"/>
</dbReference>
<dbReference type="RefSeq" id="NP_463193.1">
    <property type="nucleotide sequence ID" value="NC_003197.2"/>
</dbReference>
<dbReference type="RefSeq" id="WP_000027827.1">
    <property type="nucleotide sequence ID" value="NC_003197.2"/>
</dbReference>
<dbReference type="SMR" id="P0A1D5"/>
<dbReference type="STRING" id="99287.STM4329"/>
<dbReference type="PaxDb" id="99287-STM4329"/>
<dbReference type="GeneID" id="1255855"/>
<dbReference type="KEGG" id="stm:STM4329"/>
<dbReference type="PATRIC" id="fig|99287.12.peg.4555"/>
<dbReference type="HOGENOM" id="CLU_132825_1_1_6"/>
<dbReference type="PhylomeDB" id="P0A1D5"/>
<dbReference type="BioCyc" id="SENT99287:STM4329-MONOMER"/>
<dbReference type="PRO" id="PR:P0A1D5"/>
<dbReference type="Proteomes" id="UP000001014">
    <property type="component" value="Chromosome"/>
</dbReference>
<dbReference type="GO" id="GO:0005737">
    <property type="term" value="C:cytoplasm"/>
    <property type="evidence" value="ECO:0007669"/>
    <property type="project" value="UniProtKB-SubCell"/>
</dbReference>
<dbReference type="GO" id="GO:0005524">
    <property type="term" value="F:ATP binding"/>
    <property type="evidence" value="ECO:0007669"/>
    <property type="project" value="InterPro"/>
</dbReference>
<dbReference type="GO" id="GO:0046872">
    <property type="term" value="F:metal ion binding"/>
    <property type="evidence" value="ECO:0000318"/>
    <property type="project" value="GO_Central"/>
</dbReference>
<dbReference type="GO" id="GO:0044183">
    <property type="term" value="F:protein folding chaperone"/>
    <property type="evidence" value="ECO:0007669"/>
    <property type="project" value="InterPro"/>
</dbReference>
<dbReference type="GO" id="GO:0051087">
    <property type="term" value="F:protein-folding chaperone binding"/>
    <property type="evidence" value="ECO:0000318"/>
    <property type="project" value="GO_Central"/>
</dbReference>
<dbReference type="GO" id="GO:0051082">
    <property type="term" value="F:unfolded protein binding"/>
    <property type="evidence" value="ECO:0000318"/>
    <property type="project" value="GO_Central"/>
</dbReference>
<dbReference type="GO" id="GO:0051085">
    <property type="term" value="P:chaperone cofactor-dependent protein refolding"/>
    <property type="evidence" value="ECO:0000318"/>
    <property type="project" value="GO_Central"/>
</dbReference>
<dbReference type="CDD" id="cd00320">
    <property type="entry name" value="cpn10"/>
    <property type="match status" value="1"/>
</dbReference>
<dbReference type="FunFam" id="2.30.33.40:FF:000001">
    <property type="entry name" value="10 kDa chaperonin"/>
    <property type="match status" value="1"/>
</dbReference>
<dbReference type="Gene3D" id="2.30.33.40">
    <property type="entry name" value="GroES chaperonin"/>
    <property type="match status" value="1"/>
</dbReference>
<dbReference type="HAMAP" id="MF_00580">
    <property type="entry name" value="CH10"/>
    <property type="match status" value="1"/>
</dbReference>
<dbReference type="InterPro" id="IPR020818">
    <property type="entry name" value="Chaperonin_GroES"/>
</dbReference>
<dbReference type="InterPro" id="IPR037124">
    <property type="entry name" value="Chaperonin_GroES_sf"/>
</dbReference>
<dbReference type="InterPro" id="IPR018369">
    <property type="entry name" value="Chaprnonin_Cpn10_CS"/>
</dbReference>
<dbReference type="InterPro" id="IPR011032">
    <property type="entry name" value="GroES-like_sf"/>
</dbReference>
<dbReference type="NCBIfam" id="NF001526">
    <property type="entry name" value="PRK00364.1-1"/>
    <property type="match status" value="1"/>
</dbReference>
<dbReference type="NCBIfam" id="NF001527">
    <property type="entry name" value="PRK00364.1-2"/>
    <property type="match status" value="1"/>
</dbReference>
<dbReference type="NCBIfam" id="NF001531">
    <property type="entry name" value="PRK00364.2-2"/>
    <property type="match status" value="1"/>
</dbReference>
<dbReference type="PANTHER" id="PTHR10772">
    <property type="entry name" value="10 KDA HEAT SHOCK PROTEIN"/>
    <property type="match status" value="1"/>
</dbReference>
<dbReference type="PANTHER" id="PTHR10772:SF58">
    <property type="entry name" value="CO-CHAPERONIN GROES"/>
    <property type="match status" value="1"/>
</dbReference>
<dbReference type="Pfam" id="PF00166">
    <property type="entry name" value="Cpn10"/>
    <property type="match status" value="1"/>
</dbReference>
<dbReference type="PRINTS" id="PR00297">
    <property type="entry name" value="CHAPERONIN10"/>
</dbReference>
<dbReference type="SMART" id="SM00883">
    <property type="entry name" value="Cpn10"/>
    <property type="match status" value="1"/>
</dbReference>
<dbReference type="SUPFAM" id="SSF50129">
    <property type="entry name" value="GroES-like"/>
    <property type="match status" value="1"/>
</dbReference>
<dbReference type="PROSITE" id="PS00681">
    <property type="entry name" value="CHAPERONINS_CPN10"/>
    <property type="match status" value="1"/>
</dbReference>
<reference key="1">
    <citation type="submission" date="1999-10" db="EMBL/GenBank/DDBJ databases">
        <title>Ioslation and characterization of missense mutations in GroEL chaperone gene of Salmonella typhimurium.</title>
        <authorList>
            <person name="Yamamoto T."/>
            <person name="Hanawa T."/>
            <person name="Hachimann Y."/>
            <person name="Kamiya S."/>
        </authorList>
    </citation>
    <scope>NUCLEOTIDE SEQUENCE [GENOMIC DNA]</scope>
    <source>
        <strain>x3306</strain>
    </source>
</reference>
<reference key="2">
    <citation type="journal article" date="2001" name="Nature">
        <title>Complete genome sequence of Salmonella enterica serovar Typhimurium LT2.</title>
        <authorList>
            <person name="McClelland M."/>
            <person name="Sanderson K.E."/>
            <person name="Spieth J."/>
            <person name="Clifton S.W."/>
            <person name="Latreille P."/>
            <person name="Courtney L."/>
            <person name="Porwollik S."/>
            <person name="Ali J."/>
            <person name="Dante M."/>
            <person name="Du F."/>
            <person name="Hou S."/>
            <person name="Layman D."/>
            <person name="Leonard S."/>
            <person name="Nguyen C."/>
            <person name="Scott K."/>
            <person name="Holmes A."/>
            <person name="Grewal N."/>
            <person name="Mulvaney E."/>
            <person name="Ryan E."/>
            <person name="Sun H."/>
            <person name="Florea L."/>
            <person name="Miller W."/>
            <person name="Stoneking T."/>
            <person name="Nhan M."/>
            <person name="Waterston R."/>
            <person name="Wilson R.K."/>
        </authorList>
    </citation>
    <scope>NUCLEOTIDE SEQUENCE [LARGE SCALE GENOMIC DNA]</scope>
    <source>
        <strain>LT2 / SGSC1412 / ATCC 700720</strain>
    </source>
</reference>
<organism>
    <name type="scientific">Salmonella typhimurium (strain LT2 / SGSC1412 / ATCC 700720)</name>
    <dbReference type="NCBI Taxonomy" id="99287"/>
    <lineage>
        <taxon>Bacteria</taxon>
        <taxon>Pseudomonadati</taxon>
        <taxon>Pseudomonadota</taxon>
        <taxon>Gammaproteobacteria</taxon>
        <taxon>Enterobacterales</taxon>
        <taxon>Enterobacteriaceae</taxon>
        <taxon>Salmonella</taxon>
    </lineage>
</organism>
<comment type="function">
    <text evidence="1">Together with the chaperonin GroEL, plays an essential role in assisting protein folding. The GroEL-GroES system forms a nano-cage that allows encapsulation of the non-native substrate proteins and provides a physical environment optimized to promote and accelerate protein folding. GroES binds to the apical surface of the GroEL ring, thereby capping the opening of the GroEL channel.</text>
</comment>
<comment type="subunit">
    <text evidence="1">Heptamer of 7 subunits arranged in a ring. Interacts with the chaperonin GroEL.</text>
</comment>
<comment type="subcellular location">
    <subcellularLocation>
        <location evidence="1">Cytoplasm</location>
    </subcellularLocation>
</comment>
<comment type="similarity">
    <text evidence="1">Belongs to the GroES chaperonin family.</text>
</comment>
<name>CH10_SALTY</name>
<feature type="chain" id="PRO_0000174835" description="Co-chaperonin GroES">
    <location>
        <begin position="1"/>
        <end position="97"/>
    </location>
</feature>
<keyword id="KW-0143">Chaperone</keyword>
<keyword id="KW-0963">Cytoplasm</keyword>
<keyword id="KW-1185">Reference proteome</keyword>
<gene>
    <name evidence="1" type="primary">groES</name>
    <name evidence="1" type="synonym">groS</name>
    <name type="synonym">mopB</name>
    <name type="ordered locus">STM4329</name>
</gene>
<evidence type="ECO:0000255" key="1">
    <source>
        <dbReference type="HAMAP-Rule" id="MF_00580"/>
    </source>
</evidence>
<protein>
    <recommendedName>
        <fullName evidence="1">Co-chaperonin GroES</fullName>
    </recommendedName>
    <alternativeName>
        <fullName evidence="1">10 kDa chaperonin</fullName>
    </alternativeName>
    <alternativeName>
        <fullName evidence="1">Chaperonin-10</fullName>
        <shortName evidence="1">Cpn10</shortName>
    </alternativeName>
</protein>